<feature type="chain" id="PRO_0000416368" description="NAD(P)H-hydrate epimerase">
    <location>
        <begin position="1"/>
        <end position="221"/>
    </location>
</feature>
<feature type="domain" description="YjeF N-terminal" evidence="1">
    <location>
        <begin position="10"/>
        <end position="210"/>
    </location>
</feature>
<feature type="binding site" evidence="1">
    <location>
        <begin position="58"/>
        <end position="62"/>
    </location>
    <ligand>
        <name>(6S)-NADPHX</name>
        <dbReference type="ChEBI" id="CHEBI:64076"/>
    </ligand>
</feature>
<feature type="binding site" evidence="1">
    <location>
        <position position="59"/>
    </location>
    <ligand>
        <name>K(+)</name>
        <dbReference type="ChEBI" id="CHEBI:29103"/>
    </ligand>
</feature>
<feature type="binding site" evidence="1">
    <location>
        <position position="120"/>
    </location>
    <ligand>
        <name>K(+)</name>
        <dbReference type="ChEBI" id="CHEBI:29103"/>
    </ligand>
</feature>
<feature type="binding site" evidence="1">
    <location>
        <begin position="124"/>
        <end position="130"/>
    </location>
    <ligand>
        <name>(6S)-NADPHX</name>
        <dbReference type="ChEBI" id="CHEBI:64076"/>
    </ligand>
</feature>
<feature type="binding site" evidence="1">
    <location>
        <position position="153"/>
    </location>
    <ligand>
        <name>(6S)-NADPHX</name>
        <dbReference type="ChEBI" id="CHEBI:64076"/>
    </ligand>
</feature>
<feature type="binding site" evidence="1">
    <location>
        <position position="156"/>
    </location>
    <ligand>
        <name>K(+)</name>
        <dbReference type="ChEBI" id="CHEBI:29103"/>
    </ligand>
</feature>
<proteinExistence type="inferred from homology"/>
<protein>
    <recommendedName>
        <fullName evidence="1">NAD(P)H-hydrate epimerase</fullName>
        <ecNumber evidence="1">5.1.99.6</ecNumber>
    </recommendedName>
    <alternativeName>
        <fullName evidence="1">NAD(P)HX epimerase</fullName>
    </alternativeName>
</protein>
<reference key="1">
    <citation type="journal article" date="2006" name="Proc. Natl. Acad. Sci. U.S.A.">
        <title>Comparative genomics of the lactic acid bacteria.</title>
        <authorList>
            <person name="Makarova K.S."/>
            <person name="Slesarev A."/>
            <person name="Wolf Y.I."/>
            <person name="Sorokin A."/>
            <person name="Mirkin B."/>
            <person name="Koonin E.V."/>
            <person name="Pavlov A."/>
            <person name="Pavlova N."/>
            <person name="Karamychev V."/>
            <person name="Polouchine N."/>
            <person name="Shakhova V."/>
            <person name="Grigoriev I."/>
            <person name="Lou Y."/>
            <person name="Rohksar D."/>
            <person name="Lucas S."/>
            <person name="Huang K."/>
            <person name="Goodstein D.M."/>
            <person name="Hawkins T."/>
            <person name="Plengvidhya V."/>
            <person name="Welker D."/>
            <person name="Hughes J."/>
            <person name="Goh Y."/>
            <person name="Benson A."/>
            <person name="Baldwin K."/>
            <person name="Lee J.-H."/>
            <person name="Diaz-Muniz I."/>
            <person name="Dosti B."/>
            <person name="Smeianov V."/>
            <person name="Wechter W."/>
            <person name="Barabote R."/>
            <person name="Lorca G."/>
            <person name="Altermann E."/>
            <person name="Barrangou R."/>
            <person name="Ganesan B."/>
            <person name="Xie Y."/>
            <person name="Rawsthorne H."/>
            <person name="Tamir D."/>
            <person name="Parker C."/>
            <person name="Breidt F."/>
            <person name="Broadbent J.R."/>
            <person name="Hutkins R."/>
            <person name="O'Sullivan D."/>
            <person name="Steele J."/>
            <person name="Unlu G."/>
            <person name="Saier M.H. Jr."/>
            <person name="Klaenhammer T."/>
            <person name="Richardson P."/>
            <person name="Kozyavkin S."/>
            <person name="Weimer B.C."/>
            <person name="Mills D.A."/>
        </authorList>
    </citation>
    <scope>NUCLEOTIDE SEQUENCE [LARGE SCALE GENOMIC DNA]</scope>
    <source>
        <strain>ATCC 8293 / DSM 20343 / BCRC 11652 / CCM 1803 / JCM 6124 / NCDO 523 / NBRC 100496 / NCIMB 8023 / NCTC 12954 / NRRL B-1118 / 37Y</strain>
    </source>
</reference>
<evidence type="ECO:0000255" key="1">
    <source>
        <dbReference type="HAMAP-Rule" id="MF_01966"/>
    </source>
</evidence>
<organism>
    <name type="scientific">Leuconostoc mesenteroides subsp. mesenteroides (strain ATCC 8293 / DSM 20343 / BCRC 11652 / CCM 1803 / JCM 6124 / NCDO 523 / NBRC 100496 / NCIMB 8023 / NCTC 12954 / NRRL B-1118 / 37Y)</name>
    <dbReference type="NCBI Taxonomy" id="203120"/>
    <lineage>
        <taxon>Bacteria</taxon>
        <taxon>Bacillati</taxon>
        <taxon>Bacillota</taxon>
        <taxon>Bacilli</taxon>
        <taxon>Lactobacillales</taxon>
        <taxon>Lactobacillaceae</taxon>
        <taxon>Leuconostoc</taxon>
    </lineage>
</organism>
<dbReference type="EC" id="5.1.99.6" evidence="1"/>
<dbReference type="EMBL" id="CP000414">
    <property type="protein sequence ID" value="ABJ63013.1"/>
    <property type="molecule type" value="Genomic_DNA"/>
</dbReference>
<dbReference type="RefSeq" id="WP_010285559.1">
    <property type="nucleotide sequence ID" value="NC_008531.1"/>
</dbReference>
<dbReference type="SMR" id="Q03UV9"/>
<dbReference type="EnsemblBacteria" id="ABJ63013">
    <property type="protein sequence ID" value="ABJ63013"/>
    <property type="gene ID" value="LEUM_1942"/>
</dbReference>
<dbReference type="GeneID" id="29576465"/>
<dbReference type="KEGG" id="lme:LEUM_1942"/>
<dbReference type="eggNOG" id="COG0062">
    <property type="taxonomic scope" value="Bacteria"/>
</dbReference>
<dbReference type="HOGENOM" id="CLU_024853_0_0_9"/>
<dbReference type="Proteomes" id="UP000000362">
    <property type="component" value="Chromosome"/>
</dbReference>
<dbReference type="GO" id="GO:0000932">
    <property type="term" value="C:P-body"/>
    <property type="evidence" value="ECO:0007669"/>
    <property type="project" value="TreeGrafter"/>
</dbReference>
<dbReference type="GO" id="GO:0046872">
    <property type="term" value="F:metal ion binding"/>
    <property type="evidence" value="ECO:0007669"/>
    <property type="project" value="UniProtKB-KW"/>
</dbReference>
<dbReference type="GO" id="GO:0003729">
    <property type="term" value="F:mRNA binding"/>
    <property type="evidence" value="ECO:0007669"/>
    <property type="project" value="TreeGrafter"/>
</dbReference>
<dbReference type="GO" id="GO:0052856">
    <property type="term" value="F:NAD(P)HX epimerase activity"/>
    <property type="evidence" value="ECO:0007669"/>
    <property type="project" value="UniProtKB-UniRule"/>
</dbReference>
<dbReference type="GO" id="GO:0000166">
    <property type="term" value="F:nucleotide binding"/>
    <property type="evidence" value="ECO:0007669"/>
    <property type="project" value="UniProtKB-KW"/>
</dbReference>
<dbReference type="GO" id="GO:0031087">
    <property type="term" value="P:deadenylation-independent decapping of nuclear-transcribed mRNA"/>
    <property type="evidence" value="ECO:0007669"/>
    <property type="project" value="TreeGrafter"/>
</dbReference>
<dbReference type="GO" id="GO:0033962">
    <property type="term" value="P:P-body assembly"/>
    <property type="evidence" value="ECO:0007669"/>
    <property type="project" value="TreeGrafter"/>
</dbReference>
<dbReference type="Gene3D" id="3.40.50.10260">
    <property type="entry name" value="YjeF N-terminal domain"/>
    <property type="match status" value="1"/>
</dbReference>
<dbReference type="HAMAP" id="MF_01966">
    <property type="entry name" value="NADHX_epimerase"/>
    <property type="match status" value="1"/>
</dbReference>
<dbReference type="InterPro" id="IPR004443">
    <property type="entry name" value="YjeF_N_dom"/>
</dbReference>
<dbReference type="InterPro" id="IPR036652">
    <property type="entry name" value="YjeF_N_dom_sf"/>
</dbReference>
<dbReference type="NCBIfam" id="TIGR00197">
    <property type="entry name" value="yjeF_nterm"/>
    <property type="match status" value="1"/>
</dbReference>
<dbReference type="PANTHER" id="PTHR13612">
    <property type="entry name" value="ENHANCER OF MRNA-DECAPPING PROTEIN 3"/>
    <property type="match status" value="1"/>
</dbReference>
<dbReference type="PANTHER" id="PTHR13612:SF0">
    <property type="entry name" value="ENHANCER OF MRNA-DECAPPING PROTEIN 3"/>
    <property type="match status" value="1"/>
</dbReference>
<dbReference type="Pfam" id="PF03853">
    <property type="entry name" value="YjeF_N"/>
    <property type="match status" value="1"/>
</dbReference>
<dbReference type="SUPFAM" id="SSF64153">
    <property type="entry name" value="YjeF N-terminal domain-like"/>
    <property type="match status" value="1"/>
</dbReference>
<dbReference type="PROSITE" id="PS51385">
    <property type="entry name" value="YJEF_N"/>
    <property type="match status" value="1"/>
</dbReference>
<accession>Q03UV9</accession>
<gene>
    <name evidence="1" type="primary">nnrE</name>
    <name type="ordered locus">LEUM_1942</name>
</gene>
<keyword id="KW-0413">Isomerase</keyword>
<keyword id="KW-0479">Metal-binding</keyword>
<keyword id="KW-0520">NAD</keyword>
<keyword id="KW-0521">NADP</keyword>
<keyword id="KW-0547">Nucleotide-binding</keyword>
<keyword id="KW-0630">Potassium</keyword>
<keyword id="KW-1185">Reference proteome</keyword>
<sequence>MTRLVTATEMQQIDNYTIETIGMPQDVLIERAAMAVLDVIGAGRFDLSHVLVLAGLGNNGADGVAIARLLYAQGVNVSLQFVGNVSRAKDSVKRQLAIIEKHGLVRSEKSDFNEATLIIDAIFGVGLNNVLPEGLQKMIKAANHIDKPVIAVDVPTGIDATTGEVRGAALKAHTTVTFGFTKVGLTQQNGCYLSGNVILKDVGMLIPDDFEFSLQETLPVA</sequence>
<comment type="function">
    <text evidence="1">Catalyzes the epimerization of the S- and R-forms of NAD(P)HX, a damaged form of NAD(P)H that is a result of enzymatic or heat-dependent hydration. This is a prerequisite for the S-specific NAD(P)H-hydrate dehydratase to allow the repair of both epimers of NAD(P)HX.</text>
</comment>
<comment type="catalytic activity">
    <reaction evidence="1">
        <text>(6R)-NADHX = (6S)-NADHX</text>
        <dbReference type="Rhea" id="RHEA:32215"/>
        <dbReference type="ChEBI" id="CHEBI:64074"/>
        <dbReference type="ChEBI" id="CHEBI:64075"/>
        <dbReference type="EC" id="5.1.99.6"/>
    </reaction>
</comment>
<comment type="catalytic activity">
    <reaction evidence="1">
        <text>(6R)-NADPHX = (6S)-NADPHX</text>
        <dbReference type="Rhea" id="RHEA:32227"/>
        <dbReference type="ChEBI" id="CHEBI:64076"/>
        <dbReference type="ChEBI" id="CHEBI:64077"/>
        <dbReference type="EC" id="5.1.99.6"/>
    </reaction>
</comment>
<comment type="cofactor">
    <cofactor evidence="1">
        <name>K(+)</name>
        <dbReference type="ChEBI" id="CHEBI:29103"/>
    </cofactor>
    <text evidence="1">Binds 1 potassium ion per subunit.</text>
</comment>
<comment type="similarity">
    <text evidence="1">Belongs to the NnrE/AIBP family.</text>
</comment>
<name>NNRE_LEUMM</name>